<keyword id="KW-1015">Disulfide bond</keyword>
<keyword id="KW-0325">Glycoprotein</keyword>
<keyword id="KW-0372">Hormone</keyword>
<keyword id="KW-1185">Reference proteome</keyword>
<keyword id="KW-0964">Secreted</keyword>
<keyword id="KW-0732">Signal</keyword>
<protein>
    <recommendedName>
        <fullName>Somatolactin</fullName>
        <shortName>SL</shortName>
    </recommendedName>
</protein>
<organism>
    <name type="scientific">Carassius auratus</name>
    <name type="common">Goldfish</name>
    <dbReference type="NCBI Taxonomy" id="7957"/>
    <lineage>
        <taxon>Eukaryota</taxon>
        <taxon>Metazoa</taxon>
        <taxon>Chordata</taxon>
        <taxon>Craniata</taxon>
        <taxon>Vertebrata</taxon>
        <taxon>Euteleostomi</taxon>
        <taxon>Actinopterygii</taxon>
        <taxon>Neopterygii</taxon>
        <taxon>Teleostei</taxon>
        <taxon>Ostariophysi</taxon>
        <taxon>Cypriniformes</taxon>
        <taxon>Cyprinidae</taxon>
        <taxon>Cyprininae</taxon>
        <taxon>Carassius</taxon>
    </lineage>
</organism>
<evidence type="ECO:0000250" key="1"/>
<evidence type="ECO:0000255" key="2"/>
<evidence type="ECO:0000305" key="3"/>
<feature type="signal peptide" evidence="2">
    <location>
        <begin position="1"/>
        <end position="23"/>
    </location>
</feature>
<feature type="chain" id="PRO_0000033066" description="Somatolactin">
    <location>
        <begin position="24"/>
        <end position="230"/>
    </location>
</feature>
<feature type="glycosylation site" description="N-linked (GlcNAc...) asparagine" evidence="2">
    <location>
        <position position="226"/>
    </location>
</feature>
<feature type="disulfide bond" evidence="1">
    <location>
        <begin position="28"/>
        <end position="38"/>
    </location>
</feature>
<feature type="disulfide bond" evidence="1">
    <location>
        <begin position="87"/>
        <end position="202"/>
    </location>
</feature>
<feature type="disulfide bond" evidence="1">
    <location>
        <begin position="219"/>
        <end position="227"/>
    </location>
</feature>
<name>SOML_CARAU</name>
<proteinExistence type="evidence at transcript level"/>
<comment type="subcellular location">
    <subcellularLocation>
        <location>Secreted</location>
    </subcellularLocation>
</comment>
<comment type="similarity">
    <text evidence="3">Belongs to the somatotropin/prolactin family.</text>
</comment>
<dbReference type="EMBL" id="U72940">
    <property type="protein sequence ID" value="AAC60098.1"/>
    <property type="molecule type" value="mRNA"/>
</dbReference>
<dbReference type="PIR" id="JC5418">
    <property type="entry name" value="JC5418"/>
</dbReference>
<dbReference type="RefSeq" id="XP_026076411.1">
    <property type="nucleotide sequence ID" value="XM_026220626.1"/>
</dbReference>
<dbReference type="SMR" id="P79697"/>
<dbReference type="GeneID" id="113054826"/>
<dbReference type="OrthoDB" id="9945472at2759"/>
<dbReference type="Proteomes" id="UP000515129">
    <property type="component" value="Chromosome 35"/>
</dbReference>
<dbReference type="GO" id="GO:0005615">
    <property type="term" value="C:extracellular space"/>
    <property type="evidence" value="ECO:0007669"/>
    <property type="project" value="TreeGrafter"/>
</dbReference>
<dbReference type="GO" id="GO:0070186">
    <property type="term" value="F:growth hormone activity"/>
    <property type="evidence" value="ECO:0007669"/>
    <property type="project" value="TreeGrafter"/>
</dbReference>
<dbReference type="GO" id="GO:0005131">
    <property type="term" value="F:growth hormone receptor binding"/>
    <property type="evidence" value="ECO:0007669"/>
    <property type="project" value="TreeGrafter"/>
</dbReference>
<dbReference type="GO" id="GO:0048513">
    <property type="term" value="P:animal organ development"/>
    <property type="evidence" value="ECO:0007669"/>
    <property type="project" value="TreeGrafter"/>
</dbReference>
<dbReference type="GO" id="GO:0060396">
    <property type="term" value="P:growth hormone receptor signaling pathway"/>
    <property type="evidence" value="ECO:0007669"/>
    <property type="project" value="TreeGrafter"/>
</dbReference>
<dbReference type="GO" id="GO:0045927">
    <property type="term" value="P:positive regulation of growth"/>
    <property type="evidence" value="ECO:0007669"/>
    <property type="project" value="TreeGrafter"/>
</dbReference>
<dbReference type="GO" id="GO:0046427">
    <property type="term" value="P:positive regulation of receptor signaling pathway via JAK-STAT"/>
    <property type="evidence" value="ECO:0007669"/>
    <property type="project" value="TreeGrafter"/>
</dbReference>
<dbReference type="GO" id="GO:0031667">
    <property type="term" value="P:response to nutrient levels"/>
    <property type="evidence" value="ECO:0007669"/>
    <property type="project" value="TreeGrafter"/>
</dbReference>
<dbReference type="CDD" id="cd10286">
    <property type="entry name" value="somatolactin"/>
    <property type="match status" value="1"/>
</dbReference>
<dbReference type="Gene3D" id="1.20.1250.10">
    <property type="match status" value="1"/>
</dbReference>
<dbReference type="InterPro" id="IPR009079">
    <property type="entry name" value="4_helix_cytokine-like_core"/>
</dbReference>
<dbReference type="InterPro" id="IPR001400">
    <property type="entry name" value="Somatotropin/Prolactin"/>
</dbReference>
<dbReference type="InterPro" id="IPR018116">
    <property type="entry name" value="Somatotropin_CS"/>
</dbReference>
<dbReference type="PANTHER" id="PTHR11417:SF3">
    <property type="entry name" value="SOMATOLACTIN ALPHA ISOFORM X1-RELATED"/>
    <property type="match status" value="1"/>
</dbReference>
<dbReference type="PANTHER" id="PTHR11417">
    <property type="entry name" value="SOMATOTROPIN,PROLACTIN"/>
    <property type="match status" value="1"/>
</dbReference>
<dbReference type="Pfam" id="PF00103">
    <property type="entry name" value="Hormone_1"/>
    <property type="match status" value="1"/>
</dbReference>
<dbReference type="PRINTS" id="PR00836">
    <property type="entry name" value="SOMATOTROPIN"/>
</dbReference>
<dbReference type="SUPFAM" id="SSF47266">
    <property type="entry name" value="4-helical cytokines"/>
    <property type="match status" value="1"/>
</dbReference>
<dbReference type="PROSITE" id="PS00338">
    <property type="entry name" value="SOMATOTROPIN_2"/>
    <property type="match status" value="1"/>
</dbReference>
<accession>P79697</accession>
<sequence>MKKTTVLQVCMVFVVCSLQAVIGSPVDCPDQDTAGVSCIISLEKLLERAVQHAELIHHIAEESKLLFDEMLISFGVVNLHISEGTMCSPKTVSVPMSKTEIQQISDKWLLHSVLILVQFWINPLVDVQASLMNYQNAPSALVDRSKLMSTKITSLEQGILVLIRQILGEGGLVVEGPEDTSDHFVSSDTFETVRRDYSVIYCFRKDAHKIQTLLKLLKCRQIDKENCSLF</sequence>
<reference key="1">
    <citation type="journal article" date="1997" name="Biochem. Biophys. Res. Commun.">
        <title>Sequence of a cDNA clone encoding a novel somatolactin in goldfish, Carassius auratus.</title>
        <authorList>
            <person name="Cheng K.W."/>
            <person name="Chan Y.H."/>
            <person name="Chen Y.D."/>
            <person name="Yu K.L."/>
            <person name="Chan K.M."/>
        </authorList>
    </citation>
    <scope>NUCLEOTIDE SEQUENCE [MRNA]</scope>
</reference>